<reference key="1">
    <citation type="journal article" date="2005" name="Science">
        <title>The transcriptional landscape of the mammalian genome.</title>
        <authorList>
            <person name="Carninci P."/>
            <person name="Kasukawa T."/>
            <person name="Katayama S."/>
            <person name="Gough J."/>
            <person name="Frith M.C."/>
            <person name="Maeda N."/>
            <person name="Oyama R."/>
            <person name="Ravasi T."/>
            <person name="Lenhard B."/>
            <person name="Wells C."/>
            <person name="Kodzius R."/>
            <person name="Shimokawa K."/>
            <person name="Bajic V.B."/>
            <person name="Brenner S.E."/>
            <person name="Batalov S."/>
            <person name="Forrest A.R."/>
            <person name="Zavolan M."/>
            <person name="Davis M.J."/>
            <person name="Wilming L.G."/>
            <person name="Aidinis V."/>
            <person name="Allen J.E."/>
            <person name="Ambesi-Impiombato A."/>
            <person name="Apweiler R."/>
            <person name="Aturaliya R.N."/>
            <person name="Bailey T.L."/>
            <person name="Bansal M."/>
            <person name="Baxter L."/>
            <person name="Beisel K.W."/>
            <person name="Bersano T."/>
            <person name="Bono H."/>
            <person name="Chalk A.M."/>
            <person name="Chiu K.P."/>
            <person name="Choudhary V."/>
            <person name="Christoffels A."/>
            <person name="Clutterbuck D.R."/>
            <person name="Crowe M.L."/>
            <person name="Dalla E."/>
            <person name="Dalrymple B.P."/>
            <person name="de Bono B."/>
            <person name="Della Gatta G."/>
            <person name="di Bernardo D."/>
            <person name="Down T."/>
            <person name="Engstrom P."/>
            <person name="Fagiolini M."/>
            <person name="Faulkner G."/>
            <person name="Fletcher C.F."/>
            <person name="Fukushima T."/>
            <person name="Furuno M."/>
            <person name="Futaki S."/>
            <person name="Gariboldi M."/>
            <person name="Georgii-Hemming P."/>
            <person name="Gingeras T.R."/>
            <person name="Gojobori T."/>
            <person name="Green R.E."/>
            <person name="Gustincich S."/>
            <person name="Harbers M."/>
            <person name="Hayashi Y."/>
            <person name="Hensch T.K."/>
            <person name="Hirokawa N."/>
            <person name="Hill D."/>
            <person name="Huminiecki L."/>
            <person name="Iacono M."/>
            <person name="Ikeo K."/>
            <person name="Iwama A."/>
            <person name="Ishikawa T."/>
            <person name="Jakt M."/>
            <person name="Kanapin A."/>
            <person name="Katoh M."/>
            <person name="Kawasawa Y."/>
            <person name="Kelso J."/>
            <person name="Kitamura H."/>
            <person name="Kitano H."/>
            <person name="Kollias G."/>
            <person name="Krishnan S.P."/>
            <person name="Kruger A."/>
            <person name="Kummerfeld S.K."/>
            <person name="Kurochkin I.V."/>
            <person name="Lareau L.F."/>
            <person name="Lazarevic D."/>
            <person name="Lipovich L."/>
            <person name="Liu J."/>
            <person name="Liuni S."/>
            <person name="McWilliam S."/>
            <person name="Madan Babu M."/>
            <person name="Madera M."/>
            <person name="Marchionni L."/>
            <person name="Matsuda H."/>
            <person name="Matsuzawa S."/>
            <person name="Miki H."/>
            <person name="Mignone F."/>
            <person name="Miyake S."/>
            <person name="Morris K."/>
            <person name="Mottagui-Tabar S."/>
            <person name="Mulder N."/>
            <person name="Nakano N."/>
            <person name="Nakauchi H."/>
            <person name="Ng P."/>
            <person name="Nilsson R."/>
            <person name="Nishiguchi S."/>
            <person name="Nishikawa S."/>
            <person name="Nori F."/>
            <person name="Ohara O."/>
            <person name="Okazaki Y."/>
            <person name="Orlando V."/>
            <person name="Pang K.C."/>
            <person name="Pavan W.J."/>
            <person name="Pavesi G."/>
            <person name="Pesole G."/>
            <person name="Petrovsky N."/>
            <person name="Piazza S."/>
            <person name="Reed J."/>
            <person name="Reid J.F."/>
            <person name="Ring B.Z."/>
            <person name="Ringwald M."/>
            <person name="Rost B."/>
            <person name="Ruan Y."/>
            <person name="Salzberg S.L."/>
            <person name="Sandelin A."/>
            <person name="Schneider C."/>
            <person name="Schoenbach C."/>
            <person name="Sekiguchi K."/>
            <person name="Semple C.A."/>
            <person name="Seno S."/>
            <person name="Sessa L."/>
            <person name="Sheng Y."/>
            <person name="Shibata Y."/>
            <person name="Shimada H."/>
            <person name="Shimada K."/>
            <person name="Silva D."/>
            <person name="Sinclair B."/>
            <person name="Sperling S."/>
            <person name="Stupka E."/>
            <person name="Sugiura K."/>
            <person name="Sultana R."/>
            <person name="Takenaka Y."/>
            <person name="Taki K."/>
            <person name="Tammoja K."/>
            <person name="Tan S.L."/>
            <person name="Tang S."/>
            <person name="Taylor M.S."/>
            <person name="Tegner J."/>
            <person name="Teichmann S.A."/>
            <person name="Ueda H.R."/>
            <person name="van Nimwegen E."/>
            <person name="Verardo R."/>
            <person name="Wei C.L."/>
            <person name="Yagi K."/>
            <person name="Yamanishi H."/>
            <person name="Zabarovsky E."/>
            <person name="Zhu S."/>
            <person name="Zimmer A."/>
            <person name="Hide W."/>
            <person name="Bult C."/>
            <person name="Grimmond S.M."/>
            <person name="Teasdale R.D."/>
            <person name="Liu E.T."/>
            <person name="Brusic V."/>
            <person name="Quackenbush J."/>
            <person name="Wahlestedt C."/>
            <person name="Mattick J.S."/>
            <person name="Hume D.A."/>
            <person name="Kai C."/>
            <person name="Sasaki D."/>
            <person name="Tomaru Y."/>
            <person name="Fukuda S."/>
            <person name="Kanamori-Katayama M."/>
            <person name="Suzuki M."/>
            <person name="Aoki J."/>
            <person name="Arakawa T."/>
            <person name="Iida J."/>
            <person name="Imamura K."/>
            <person name="Itoh M."/>
            <person name="Kato T."/>
            <person name="Kawaji H."/>
            <person name="Kawagashira N."/>
            <person name="Kawashima T."/>
            <person name="Kojima M."/>
            <person name="Kondo S."/>
            <person name="Konno H."/>
            <person name="Nakano K."/>
            <person name="Ninomiya N."/>
            <person name="Nishio T."/>
            <person name="Okada M."/>
            <person name="Plessy C."/>
            <person name="Shibata K."/>
            <person name="Shiraki T."/>
            <person name="Suzuki S."/>
            <person name="Tagami M."/>
            <person name="Waki K."/>
            <person name="Watahiki A."/>
            <person name="Okamura-Oho Y."/>
            <person name="Suzuki H."/>
            <person name="Kawai J."/>
            <person name="Hayashizaki Y."/>
        </authorList>
    </citation>
    <scope>NUCLEOTIDE SEQUENCE [LARGE SCALE MRNA]</scope>
    <source>
        <strain>C57BL/6J</strain>
        <tissue>Corpora quadrigemina</tissue>
        <tissue>Eye</tissue>
        <tissue>Thymus</tissue>
    </source>
</reference>
<reference key="2">
    <citation type="journal article" date="2004" name="Genome Res.">
        <title>The status, quality, and expansion of the NIH full-length cDNA project: the Mammalian Gene Collection (MGC).</title>
        <authorList>
            <consortium name="The MGC Project Team"/>
        </authorList>
    </citation>
    <scope>NUCLEOTIDE SEQUENCE [LARGE SCALE MRNA]</scope>
    <source>
        <strain>C57BL/6J</strain>
        <tissue>Embryo</tissue>
    </source>
</reference>
<reference key="3">
    <citation type="journal article" date="2010" name="Cell">
        <title>A tissue-specific atlas of mouse protein phosphorylation and expression.</title>
        <authorList>
            <person name="Huttlin E.L."/>
            <person name="Jedrychowski M.P."/>
            <person name="Elias J.E."/>
            <person name="Goswami T."/>
            <person name="Rad R."/>
            <person name="Beausoleil S.A."/>
            <person name="Villen J."/>
            <person name="Haas W."/>
            <person name="Sowa M.E."/>
            <person name="Gygi S.P."/>
        </authorList>
    </citation>
    <scope>IDENTIFICATION BY MASS SPECTROMETRY [LARGE SCALE ANALYSIS]</scope>
    <source>
        <tissue>Pancreas</tissue>
    </source>
</reference>
<keyword id="KW-0007">Acetylation</keyword>
<keyword id="KW-0333">Golgi apparatus</keyword>
<keyword id="KW-0472">Membrane</keyword>
<keyword id="KW-0597">Phosphoprotein</keyword>
<keyword id="KW-1185">Reference proteome</keyword>
<keyword id="KW-0812">Transmembrane</keyword>
<keyword id="KW-1133">Transmembrane helix</keyword>
<feature type="initiator methionine" description="Removed" evidence="2">
    <location>
        <position position="1"/>
    </location>
</feature>
<feature type="chain" id="PRO_0000242669" description="Protein YIPF6">
    <location>
        <begin position="2"/>
        <end position="236"/>
    </location>
</feature>
<feature type="topological domain" description="Cytoplasmic" evidence="2">
    <location>
        <begin position="2"/>
        <end position="84"/>
    </location>
</feature>
<feature type="transmembrane region" description="Helical" evidence="3">
    <location>
        <begin position="85"/>
        <end position="105"/>
    </location>
</feature>
<feature type="topological domain" description="Lumenal" evidence="4">
    <location>
        <begin position="106"/>
        <end position="116"/>
    </location>
</feature>
<feature type="transmembrane region" description="Helical" evidence="3">
    <location>
        <begin position="117"/>
        <end position="137"/>
    </location>
</feature>
<feature type="topological domain" description="Cytoplasmic" evidence="4">
    <location>
        <begin position="138"/>
        <end position="147"/>
    </location>
</feature>
<feature type="transmembrane region" description="Helical" evidence="3">
    <location>
        <begin position="148"/>
        <end position="168"/>
    </location>
</feature>
<feature type="topological domain" description="Lumenal" evidence="4">
    <location>
        <begin position="169"/>
        <end position="185"/>
    </location>
</feature>
<feature type="transmembrane region" description="Helical" evidence="3">
    <location>
        <begin position="186"/>
        <end position="206"/>
    </location>
</feature>
<feature type="topological domain" description="Cytoplasmic" evidence="4">
    <location>
        <begin position="207"/>
        <end position="213"/>
    </location>
</feature>
<feature type="transmembrane region" description="Helical" evidence="3">
    <location>
        <begin position="214"/>
        <end position="234"/>
    </location>
</feature>
<feature type="topological domain" description="Lumenal" evidence="2">
    <location>
        <begin position="235"/>
        <end position="236"/>
    </location>
</feature>
<feature type="modified residue" description="N-acetylalanine" evidence="2">
    <location>
        <position position="2"/>
    </location>
</feature>
<feature type="modified residue" description="Phosphoserine" evidence="1">
    <location>
        <position position="7"/>
    </location>
</feature>
<evidence type="ECO:0000250" key="1">
    <source>
        <dbReference type="UniProtKB" id="Q4QQU5"/>
    </source>
</evidence>
<evidence type="ECO:0000250" key="2">
    <source>
        <dbReference type="UniProtKB" id="Q96EC8"/>
    </source>
</evidence>
<evidence type="ECO:0000255" key="3"/>
<evidence type="ECO:0000305" key="4"/>
<protein>
    <recommendedName>
        <fullName>Protein YIPF6</fullName>
    </recommendedName>
    <alternativeName>
        <fullName>YIP1 family member 6</fullName>
    </alternativeName>
</protein>
<dbReference type="EMBL" id="AK045453">
    <property type="protein sequence ID" value="BAC32377.1"/>
    <property type="molecule type" value="mRNA"/>
</dbReference>
<dbReference type="EMBL" id="AK079683">
    <property type="protein sequence ID" value="BAC37722.1"/>
    <property type="molecule type" value="mRNA"/>
</dbReference>
<dbReference type="EMBL" id="AK143152">
    <property type="protein sequence ID" value="BAE25283.1"/>
    <property type="molecule type" value="mRNA"/>
</dbReference>
<dbReference type="EMBL" id="BC048712">
    <property type="protein sequence ID" value="AAH48712.1"/>
    <property type="molecule type" value="mRNA"/>
</dbReference>
<dbReference type="CCDS" id="CCDS30296.1"/>
<dbReference type="RefSeq" id="NP_997516.1">
    <property type="nucleotide sequence ID" value="NM_207633.2"/>
</dbReference>
<dbReference type="RefSeq" id="XP_006528401.3">
    <property type="nucleotide sequence ID" value="XM_006528338.5"/>
</dbReference>
<dbReference type="RefSeq" id="XP_006528402.3">
    <property type="nucleotide sequence ID" value="XM_006528339.5"/>
</dbReference>
<dbReference type="BioGRID" id="219028">
    <property type="interactions" value="2"/>
</dbReference>
<dbReference type="FunCoup" id="Q8BR70">
    <property type="interactions" value="2646"/>
</dbReference>
<dbReference type="STRING" id="10090.ENSMUSP00000056039"/>
<dbReference type="iPTMnet" id="Q8BR70"/>
<dbReference type="PhosphoSitePlus" id="Q8BR70"/>
<dbReference type="jPOST" id="Q8BR70"/>
<dbReference type="PaxDb" id="10090-ENSMUSP00000056039"/>
<dbReference type="ProteomicsDB" id="299607"/>
<dbReference type="Antibodypedia" id="554">
    <property type="antibodies" value="50 antibodies from 14 providers"/>
</dbReference>
<dbReference type="Ensembl" id="ENSMUST00000054697.7">
    <property type="protein sequence ID" value="ENSMUSP00000056039.6"/>
    <property type="gene ID" value="ENSMUSG00000047694.13"/>
</dbReference>
<dbReference type="Ensembl" id="ENSMUST00000113811.8">
    <property type="protein sequence ID" value="ENSMUSP00000109442.2"/>
    <property type="gene ID" value="ENSMUSG00000047694.13"/>
</dbReference>
<dbReference type="GeneID" id="77929"/>
<dbReference type="KEGG" id="mmu:77929"/>
<dbReference type="UCSC" id="uc009tvd.1">
    <property type="organism name" value="mouse"/>
</dbReference>
<dbReference type="AGR" id="MGI:1925179"/>
<dbReference type="CTD" id="286451"/>
<dbReference type="MGI" id="MGI:1925179">
    <property type="gene designation" value="Yipf6"/>
</dbReference>
<dbReference type="VEuPathDB" id="HostDB:ENSMUSG00000047694"/>
<dbReference type="eggNOG" id="KOG2946">
    <property type="taxonomic scope" value="Eukaryota"/>
</dbReference>
<dbReference type="GeneTree" id="ENSGT00940000153168"/>
<dbReference type="HOGENOM" id="CLU_059592_3_0_1"/>
<dbReference type="InParanoid" id="Q8BR70"/>
<dbReference type="OMA" id="VMAMFGW"/>
<dbReference type="OrthoDB" id="411251at2759"/>
<dbReference type="PhylomeDB" id="Q8BR70"/>
<dbReference type="TreeFam" id="TF314563"/>
<dbReference type="Reactome" id="R-MMU-432722">
    <property type="pathway name" value="Golgi Associated Vesicle Biogenesis"/>
</dbReference>
<dbReference type="BioGRID-ORCS" id="77929">
    <property type="hits" value="2 hits in 78 CRISPR screens"/>
</dbReference>
<dbReference type="ChiTaRS" id="Yipf6">
    <property type="organism name" value="mouse"/>
</dbReference>
<dbReference type="PRO" id="PR:Q8BR70"/>
<dbReference type="Proteomes" id="UP000000589">
    <property type="component" value="Chromosome X"/>
</dbReference>
<dbReference type="RNAct" id="Q8BR70">
    <property type="molecule type" value="protein"/>
</dbReference>
<dbReference type="Bgee" id="ENSMUSG00000047694">
    <property type="expression patterns" value="Expressed in secondary oocyte and 223 other cell types or tissues"/>
</dbReference>
<dbReference type="ExpressionAtlas" id="Q8BR70">
    <property type="expression patterns" value="baseline and differential"/>
</dbReference>
<dbReference type="GO" id="GO:0005801">
    <property type="term" value="C:cis-Golgi network"/>
    <property type="evidence" value="ECO:0000314"/>
    <property type="project" value="MGI"/>
</dbReference>
<dbReference type="GO" id="GO:0030134">
    <property type="term" value="C:COPII-coated ER to Golgi transport vesicle"/>
    <property type="evidence" value="ECO:0000314"/>
    <property type="project" value="MGI"/>
</dbReference>
<dbReference type="GO" id="GO:0005783">
    <property type="term" value="C:endoplasmic reticulum"/>
    <property type="evidence" value="ECO:0007669"/>
    <property type="project" value="Ensembl"/>
</dbReference>
<dbReference type="GO" id="GO:0005797">
    <property type="term" value="C:Golgi medial cisterna"/>
    <property type="evidence" value="ECO:0000250"/>
    <property type="project" value="UniProtKB"/>
</dbReference>
<dbReference type="GO" id="GO:0000139">
    <property type="term" value="C:Golgi membrane"/>
    <property type="evidence" value="ECO:0007669"/>
    <property type="project" value="UniProtKB-SubCell"/>
</dbReference>
<dbReference type="GO" id="GO:0000138">
    <property type="term" value="C:Golgi trans cisterna"/>
    <property type="evidence" value="ECO:0000250"/>
    <property type="project" value="UniProtKB"/>
</dbReference>
<dbReference type="GO" id="GO:0005802">
    <property type="term" value="C:trans-Golgi network"/>
    <property type="evidence" value="ECO:0000314"/>
    <property type="project" value="MGI"/>
</dbReference>
<dbReference type="GO" id="GO:0042802">
    <property type="term" value="F:identical protein binding"/>
    <property type="evidence" value="ECO:0000314"/>
    <property type="project" value="MGI"/>
</dbReference>
<dbReference type="GO" id="GO:0006888">
    <property type="term" value="P:endoplasmic reticulum to Golgi vesicle-mediated transport"/>
    <property type="evidence" value="ECO:0007669"/>
    <property type="project" value="InterPro"/>
</dbReference>
<dbReference type="GO" id="GO:0060576">
    <property type="term" value="P:intestinal epithelial cell development"/>
    <property type="evidence" value="ECO:0000315"/>
    <property type="project" value="MGI"/>
</dbReference>
<dbReference type="InterPro" id="IPR045231">
    <property type="entry name" value="Yip1/4-like"/>
</dbReference>
<dbReference type="InterPro" id="IPR006977">
    <property type="entry name" value="Yip1_dom"/>
</dbReference>
<dbReference type="PANTHER" id="PTHR21236">
    <property type="entry name" value="GOLGI MEMBRANE PROTEIN YIP1"/>
    <property type="match status" value="1"/>
</dbReference>
<dbReference type="PANTHER" id="PTHR21236:SF1">
    <property type="entry name" value="PROTEIN YIPF6"/>
    <property type="match status" value="1"/>
</dbReference>
<dbReference type="Pfam" id="PF04893">
    <property type="entry name" value="Yip1"/>
    <property type="match status" value="1"/>
</dbReference>
<accession>Q8BR70</accession>
<accession>Q8C531</accession>
<gene>
    <name type="primary">Yipf6</name>
</gene>
<proteinExistence type="evidence at protein level"/>
<sequence>MAEAEDSPGEQEAAASKPLFAGLSDVSISQDIPIEGEITIPSRARAQEHDSSTLNESIRRTIMRDLKAVGRKFMHVLYPRKSNALLRDWDLWGPLILCVTLALMLQKSSIDGKNDGGGPEFAEVFVIIWFGAVTITLNSKLLGGNISFFQSLCVLGYCILPLNIAMLICRLLLLAGQGPINFMIRLFVVLLMFAWSVVASTAFLADSQPPNRKALAVYPVFLFYFVISWMILTFTP</sequence>
<name>YIPF6_MOUSE</name>
<organism>
    <name type="scientific">Mus musculus</name>
    <name type="common">Mouse</name>
    <dbReference type="NCBI Taxonomy" id="10090"/>
    <lineage>
        <taxon>Eukaryota</taxon>
        <taxon>Metazoa</taxon>
        <taxon>Chordata</taxon>
        <taxon>Craniata</taxon>
        <taxon>Vertebrata</taxon>
        <taxon>Euteleostomi</taxon>
        <taxon>Mammalia</taxon>
        <taxon>Eutheria</taxon>
        <taxon>Euarchontoglires</taxon>
        <taxon>Glires</taxon>
        <taxon>Rodentia</taxon>
        <taxon>Myomorpha</taxon>
        <taxon>Muroidea</taxon>
        <taxon>Muridae</taxon>
        <taxon>Murinae</taxon>
        <taxon>Mus</taxon>
        <taxon>Mus</taxon>
    </lineage>
</organism>
<comment type="function">
    <text evidence="2">May be required for stable YIPF1 and YIPF2 protein expression.</text>
</comment>
<comment type="subunit">
    <text evidence="2">Predominantly interacts with YIPF1 or YIPF2, but may also form a ternary complex with YIPF1 and YIPF2. This interaction may stabilize YIPF1 and YIPF2.</text>
</comment>
<comment type="subcellular location">
    <subcellularLocation>
        <location evidence="2">Golgi apparatus membrane</location>
        <topology evidence="2">Multi-pass membrane protein</topology>
    </subcellularLocation>
    <text evidence="2">Evenly distributed between cis- and trans-Golgi apparatus. Mainly localizes within medial-/trans-Golgi and trans-Golgi network (TGN), while less so within cis-Golgi.</text>
</comment>
<comment type="similarity">
    <text evidence="4">Belongs to the YIP1 family.</text>
</comment>